<protein>
    <recommendedName>
        <fullName>Zinc-regulated protein 8</fullName>
    </recommendedName>
</protein>
<reference key="1">
    <citation type="journal article" date="2007" name="Proc. Natl. Acad. Sci. U.S.A.">
        <title>Independent sorting-out of thousands of duplicated gene pairs in two yeast species descended from a whole-genome duplication.</title>
        <authorList>
            <person name="Scannell D.R."/>
            <person name="Frank A.C."/>
            <person name="Conant G.C."/>
            <person name="Byrne K.P."/>
            <person name="Woolfit M."/>
            <person name="Wolfe K.H."/>
        </authorList>
    </citation>
    <scope>NUCLEOTIDE SEQUENCE [LARGE SCALE GENOMIC DNA]</scope>
    <source>
        <strain>ATCC 22028 / DSM 70294 / BCRC 21397 / CBS 2163 / NBRC 10782 / NRRL Y-8283 / UCD 57-17</strain>
    </source>
</reference>
<dbReference type="EMBL" id="DS480472">
    <property type="protein sequence ID" value="EDO15220.1"/>
    <property type="molecule type" value="Genomic_DNA"/>
</dbReference>
<dbReference type="RefSeq" id="XP_001643078.1">
    <property type="nucleotide sequence ID" value="XM_001643028.1"/>
</dbReference>
<dbReference type="SMR" id="A7TR87"/>
<dbReference type="FunCoup" id="A7TR87">
    <property type="interactions" value="66"/>
</dbReference>
<dbReference type="GeneID" id="5543296"/>
<dbReference type="KEGG" id="vpo:Kpol_423p10"/>
<dbReference type="eggNOG" id="ENOG502QSM8">
    <property type="taxonomic scope" value="Eukaryota"/>
</dbReference>
<dbReference type="HOGENOM" id="CLU_301677_0_0_1"/>
<dbReference type="InParanoid" id="A7TR87"/>
<dbReference type="OMA" id="QSLKYHD"/>
<dbReference type="OrthoDB" id="3973129at2759"/>
<dbReference type="PhylomeDB" id="A7TR87"/>
<dbReference type="Proteomes" id="UP000000267">
    <property type="component" value="Unassembled WGS sequence"/>
</dbReference>
<dbReference type="GO" id="GO:0005935">
    <property type="term" value="C:cellular bud neck"/>
    <property type="evidence" value="ECO:0007669"/>
    <property type="project" value="UniProtKB-SubCell"/>
</dbReference>
<dbReference type="GO" id="GO:0005934">
    <property type="term" value="C:cellular bud tip"/>
    <property type="evidence" value="ECO:0007669"/>
    <property type="project" value="UniProtKB-SubCell"/>
</dbReference>
<dbReference type="GO" id="GO:0005737">
    <property type="term" value="C:cytoplasm"/>
    <property type="evidence" value="ECO:0007669"/>
    <property type="project" value="UniProtKB-SubCell"/>
</dbReference>
<gene>
    <name type="primary">ZRG8</name>
    <name type="ORF">Kpol_423p10</name>
</gene>
<organism>
    <name type="scientific">Vanderwaltozyma polyspora (strain ATCC 22028 / DSM 70294 / BCRC 21397 / CBS 2163 / NBRC 10782 / NRRL Y-8283 / UCD 57-17)</name>
    <name type="common">Kluyveromyces polysporus</name>
    <dbReference type="NCBI Taxonomy" id="436907"/>
    <lineage>
        <taxon>Eukaryota</taxon>
        <taxon>Fungi</taxon>
        <taxon>Dikarya</taxon>
        <taxon>Ascomycota</taxon>
        <taxon>Saccharomycotina</taxon>
        <taxon>Saccharomycetes</taxon>
        <taxon>Saccharomycetales</taxon>
        <taxon>Saccharomycetaceae</taxon>
        <taxon>Vanderwaltozyma</taxon>
    </lineage>
</organism>
<proteinExistence type="inferred from homology"/>
<accession>A7TR87</accession>
<comment type="function">
    <text evidence="1">Involved in maintenance of polarized growth and daughter-cell-specific transcription.</text>
</comment>
<comment type="subcellular location">
    <subcellularLocation>
        <location evidence="1">Cytoplasm</location>
    </subcellularLocation>
    <subcellularLocation>
        <location evidence="1">Bud</location>
    </subcellularLocation>
    <subcellularLocation>
        <location evidence="1">Bud neck</location>
    </subcellularLocation>
    <subcellularLocation>
        <location evidence="1">Bud tip</location>
    </subcellularLocation>
</comment>
<comment type="similarity">
    <text evidence="3">Belongs to the ZRG8 family.</text>
</comment>
<name>ZRG8_VANPO</name>
<sequence length="859" mass="96632">MRSFIKSHKNSNSLDGSQSRWNNSEVPNVQRSSADSFNYSGSTVISSNSNTVTSMSIPNNLPNSKNYSPKHTPSFESFHRLANKIPSKLFKKSSNNALNATYNNSLHLGESLSSPPTPRTINTSTDAIQKVRSTESEIEIPSIKGTITHSWGTRSDTGGHSIIVLNEPRSSLSGASNSDYSDLEPAARISGLKRPSIVSIKTNNSFEEYNSTPIITEEEDLKNFDSKIINPSTPNDINAVKYNNRKTQIIGNENLFRTSNLQNKVRKHFISPLENLNENVLEADNKQGVVENVQRKKKVPNLNASPQDTIDGNRSRTISFAETSKTLPQMEGASDADGESDSCSETTDDDDDDNTSKFSFEYNRPNGRTASMKYYSKPEPVNNIYIDDLYEDENFDENMNYDEDSLDGFEFPSNKFDYGNENSDENDDIQGHENYVVQDNNSSKGPKLKSEAPKKVQTYNDLFDLSDDFDYDPSDEYQNETRLIHEMCEDGEASQIDNMMVDENIISPQKSLTSSKSFNNSNVSKSSPLIKPLETPKKKIIVKPVASFADIFNLDDEEDRDFKDDDSCNDESDGEYVLKDPFNIPGGKNLLNRHKSLKKNSSFSLKKIPSNGDSIDNNLMDKKLDKYIVDINKSIKKHSDIPDLHFVPPDNSSDIILPKRSQSLKYHDLSSILDSDVPGSTRDLFFIDEAEEDSYNVKHGLTEEEYLDEINNVPEDFYFSDSEQDMSPMKSPFRRSNTGSFRRTHSFSGKPIGAAKDNTPVKSKLEIKNKTVTFFNHPWTPNSQSGFSGKSPKKSIKKTDNLENSEEEHLLATPKRDDSSAYGFSTPDRQFRKPTPEYLQDYSLSPIQEGYSSVDNSPR</sequence>
<evidence type="ECO:0000250" key="1"/>
<evidence type="ECO:0000256" key="2">
    <source>
        <dbReference type="SAM" id="MobiDB-lite"/>
    </source>
</evidence>
<evidence type="ECO:0000305" key="3"/>
<feature type="chain" id="PRO_0000333506" description="Zinc-regulated protein 8">
    <location>
        <begin position="1"/>
        <end position="859"/>
    </location>
</feature>
<feature type="region of interest" description="Disordered" evidence="2">
    <location>
        <begin position="1"/>
        <end position="72"/>
    </location>
</feature>
<feature type="region of interest" description="Disordered" evidence="2">
    <location>
        <begin position="296"/>
        <end position="374"/>
    </location>
</feature>
<feature type="region of interest" description="Disordered" evidence="2">
    <location>
        <begin position="722"/>
        <end position="758"/>
    </location>
</feature>
<feature type="region of interest" description="Disordered" evidence="2">
    <location>
        <begin position="776"/>
        <end position="859"/>
    </location>
</feature>
<feature type="compositionally biased region" description="Polar residues" evidence="2">
    <location>
        <begin position="10"/>
        <end position="39"/>
    </location>
</feature>
<feature type="compositionally biased region" description="Low complexity" evidence="2">
    <location>
        <begin position="40"/>
        <end position="57"/>
    </location>
</feature>
<feature type="compositionally biased region" description="Polar residues" evidence="2">
    <location>
        <begin position="58"/>
        <end position="72"/>
    </location>
</feature>
<feature type="compositionally biased region" description="Polar residues" evidence="2">
    <location>
        <begin position="302"/>
        <end position="327"/>
    </location>
</feature>
<feature type="compositionally biased region" description="Acidic residues" evidence="2">
    <location>
        <begin position="334"/>
        <end position="353"/>
    </location>
</feature>
<feature type="compositionally biased region" description="Polar residues" evidence="2">
    <location>
        <begin position="776"/>
        <end position="788"/>
    </location>
</feature>
<feature type="compositionally biased region" description="Basic and acidic residues" evidence="2">
    <location>
        <begin position="797"/>
        <end position="819"/>
    </location>
</feature>
<feature type="compositionally biased region" description="Polar residues" evidence="2">
    <location>
        <begin position="842"/>
        <end position="859"/>
    </location>
</feature>
<keyword id="KW-0963">Cytoplasm</keyword>
<keyword id="KW-1185">Reference proteome</keyword>
<keyword id="KW-0862">Zinc</keyword>